<sequence length="123" mass="13624">MQIASITRRGFLKVACVTTGAALIGIRMTGKAVAAVKQIKDYMLDRINGVYGADAKFPVRASQDNTQVKALYKSYLEKPLGHKSHDLLHTHWFDKSKGVKELTTAGKLPNPRASEFEGPYPYE</sequence>
<name>PHFS_NITV2</name>
<protein>
    <recommendedName>
        <fullName>Periplasmic [Fe] hydrogenase small subunit</fullName>
        <ecNumber>1.12.7.2</ecNumber>
    </recommendedName>
    <alternativeName>
        <fullName>Fe hydrogenlyase small chain</fullName>
    </alternativeName>
</protein>
<comment type="function">
    <text>May be involved in hydrogen uptake for the reduction of sulfate to hydrogen sulfide in an electron transport chain. Cytochrome c3 is likely to be the physiological electron carrier for the enzyme.</text>
</comment>
<comment type="catalytic activity">
    <reaction>
        <text>H2 + 2 oxidized [2Fe-2S]-[ferredoxin] = 2 reduced [2Fe-2S]-[ferredoxin] + 2 H(+)</text>
        <dbReference type="Rhea" id="RHEA:17445"/>
        <dbReference type="Rhea" id="RHEA-COMP:10000"/>
        <dbReference type="Rhea" id="RHEA-COMP:10001"/>
        <dbReference type="ChEBI" id="CHEBI:15378"/>
        <dbReference type="ChEBI" id="CHEBI:18276"/>
        <dbReference type="ChEBI" id="CHEBI:33737"/>
        <dbReference type="ChEBI" id="CHEBI:33738"/>
        <dbReference type="EC" id="1.12.7.2"/>
    </reaction>
</comment>
<comment type="subunit">
    <text>Heterodimer of a large and a small subunit.</text>
</comment>
<comment type="subcellular location">
    <subcellularLocation>
        <location>Periplasm</location>
    </subcellularLocation>
</comment>
<comment type="PTM">
    <text>Predicted to be exported by the Tat system. The position of the signal peptide cleavage has been experimentally proven.</text>
</comment>
<keyword id="KW-0002">3D-structure</keyword>
<keyword id="KW-0903">Direct protein sequencing</keyword>
<keyword id="KW-0408">Iron</keyword>
<keyword id="KW-0411">Iron-sulfur</keyword>
<keyword id="KW-0479">Metal-binding</keyword>
<keyword id="KW-0560">Oxidoreductase</keyword>
<keyword id="KW-0574">Periplasm</keyword>
<keyword id="KW-1185">Reference proteome</keyword>
<keyword id="KW-0732">Signal</keyword>
<proteinExistence type="evidence at protein level"/>
<reference key="1">
    <citation type="journal article" date="1985" name="Eur. J. Biochem.">
        <title>Nucleotide sequence of the gene encoding the hydrogenase from Desulfovibrio vulgaris (Hildenborough).</title>
        <authorList>
            <person name="Voordouw G."/>
            <person name="Brenner S."/>
        </authorList>
    </citation>
    <scope>NUCLEOTIDE SEQUENCE [GENOMIC DNA]</scope>
</reference>
<reference key="2">
    <citation type="journal article" date="2004" name="Nat. Biotechnol.">
        <title>The genome sequence of the anaerobic, sulfate-reducing bacterium Desulfovibrio vulgaris Hildenborough.</title>
        <authorList>
            <person name="Heidelberg J.F."/>
            <person name="Seshadri R."/>
            <person name="Haveman S.A."/>
            <person name="Hemme C.L."/>
            <person name="Paulsen I.T."/>
            <person name="Kolonay J.F."/>
            <person name="Eisen J.A."/>
            <person name="Ward N.L."/>
            <person name="Methe B.A."/>
            <person name="Brinkac L.M."/>
            <person name="Daugherty S.C."/>
            <person name="DeBoy R.T."/>
            <person name="Dodson R.J."/>
            <person name="Durkin A.S."/>
            <person name="Madupu R."/>
            <person name="Nelson W.C."/>
            <person name="Sullivan S.A."/>
            <person name="Fouts D.E."/>
            <person name="Haft D.H."/>
            <person name="Selengut J."/>
            <person name="Peterson J.D."/>
            <person name="Davidsen T.M."/>
            <person name="Zafar N."/>
            <person name="Zhou L."/>
            <person name="Radune D."/>
            <person name="Dimitrov G."/>
            <person name="Hance M."/>
            <person name="Tran K."/>
            <person name="Khouri H.M."/>
            <person name="Gill J."/>
            <person name="Utterback T.R."/>
            <person name="Feldblyum T.V."/>
            <person name="Wall J.D."/>
            <person name="Voordouw G."/>
            <person name="Fraser C.M."/>
        </authorList>
    </citation>
    <scope>NUCLEOTIDE SEQUENCE [LARGE SCALE GENOMIC DNA]</scope>
    <source>
        <strain>ATCC 29579 / DSM 644 / CCUG 34227 / NCIMB 8303 / VKM B-1760 / Hildenborough</strain>
    </source>
</reference>
<reference key="3">
    <citation type="journal article" date="1987" name="Biochem. Biophys. Res. Commun.">
        <title>Identification of three classes of hydrogenase in the genus, Desulfovibrio.</title>
        <authorList>
            <person name="Prickril B.C."/>
            <person name="He S.H."/>
            <person name="Li C."/>
            <person name="Menon N.K."/>
            <person name="Choi E.S."/>
            <person name="Przybyla A.E."/>
            <person name="Dervartanian D.V."/>
            <person name="Peck H.D. Jr."/>
            <person name="Fauque G."/>
            <person name="le Gall J."/>
            <person name="Teixeira M."/>
            <person name="Moura I."/>
            <person name="Moura J.J.G."/>
            <person name="Patil D."/>
            <person name="Huynh B.H."/>
        </authorList>
    </citation>
    <scope>PROTEIN SEQUENCE OF 35-69</scope>
</reference>
<reference key="4">
    <citation type="journal article" date="1986" name="J. Bacteriol.">
        <title>Putative signal peptide on the small subunit of the periplasmic hydrogenase from Desulfovibrio vulgaris.</title>
        <authorList>
            <person name="Prickril B.C."/>
            <person name="Czechowski M.H."/>
            <person name="Przybyla A.E."/>
            <person name="Peck H.D. Jr."/>
            <person name="le Gall J."/>
        </authorList>
    </citation>
    <scope>SIGNAL SEQUENCE CLEAVAGE SITE</scope>
</reference>
<reference key="5">
    <citation type="journal article" date="1999" name="Structure">
        <title>Desulfovibrio desulfuricans iron hydrogenase: the structure shows unusual coordination to an active site Fe binuclear center.</title>
        <authorList>
            <person name="Nicolet Y."/>
            <person name="Piras C."/>
            <person name="Legrand P."/>
            <person name="Hatchikian E.C."/>
            <person name="Fontecilla-Camps J.-C."/>
        </authorList>
    </citation>
    <scope>X-RAY CRYSTALLOGRAPHY (1.6 ANGSTROMS)</scope>
</reference>
<feature type="signal peptide" description="Tat-type signal" evidence="1 3 4">
    <location>
        <begin position="1"/>
        <end position="34"/>
    </location>
</feature>
<feature type="chain" id="PRO_0000013413" description="Periplasmic [Fe] hydrogenase small subunit">
    <location>
        <begin position="35"/>
        <end position="123"/>
    </location>
</feature>
<feature type="region of interest" description="Disordered" evidence="2">
    <location>
        <begin position="103"/>
        <end position="123"/>
    </location>
</feature>
<feature type="helix" evidence="5">
    <location>
        <begin position="39"/>
        <end position="55"/>
    </location>
</feature>
<feature type="helix" evidence="5">
    <location>
        <begin position="62"/>
        <end position="64"/>
    </location>
</feature>
<feature type="helix" evidence="5">
    <location>
        <begin position="66"/>
        <end position="74"/>
    </location>
</feature>
<feature type="helix" evidence="5">
    <location>
        <begin position="82"/>
        <end position="88"/>
    </location>
</feature>
<feature type="helix" evidence="5">
    <location>
        <begin position="97"/>
        <end position="104"/>
    </location>
</feature>
<feature type="helix" evidence="5">
    <location>
        <begin position="113"/>
        <end position="116"/>
    </location>
</feature>
<gene>
    <name type="primary">hydB</name>
    <name type="ordered locus">DVU_1770</name>
</gene>
<dbReference type="EC" id="1.12.7.2"/>
<dbReference type="EMBL" id="X02416">
    <property type="protein sequence ID" value="CAA26267.1"/>
    <property type="molecule type" value="Genomic_DNA"/>
</dbReference>
<dbReference type="EMBL" id="AE017285">
    <property type="protein sequence ID" value="AAS96247.1"/>
    <property type="molecule type" value="Genomic_DNA"/>
</dbReference>
<dbReference type="PIR" id="B24551">
    <property type="entry name" value="HQDVFS"/>
</dbReference>
<dbReference type="RefSeq" id="WP_010939058.1">
    <property type="nucleotide sequence ID" value="NC_002937.3"/>
</dbReference>
<dbReference type="RefSeq" id="YP_010988.1">
    <property type="nucleotide sequence ID" value="NC_002937.3"/>
</dbReference>
<dbReference type="PDB" id="1E08">
    <property type="method" value="NMR"/>
    <property type="chains" value="D=36-123"/>
</dbReference>
<dbReference type="PDB" id="1GX7">
    <property type="method" value="NMR"/>
    <property type="chains" value="D=36-123"/>
</dbReference>
<dbReference type="PDB" id="1HFE">
    <property type="method" value="X-ray"/>
    <property type="resolution" value="1.60 A"/>
    <property type="chains" value="S/T=1-123"/>
</dbReference>
<dbReference type="PDB" id="8BJ7">
    <property type="method" value="X-ray"/>
    <property type="resolution" value="1.04 A"/>
    <property type="chains" value="B=36-123"/>
</dbReference>
<dbReference type="PDB" id="8BJ8">
    <property type="method" value="X-ray"/>
    <property type="resolution" value="1.01 A"/>
    <property type="chains" value="B=36-123"/>
</dbReference>
<dbReference type="PDB" id="8RTG">
    <property type="method" value="X-ray"/>
    <property type="resolution" value="1.46 A"/>
    <property type="chains" value="B=36-123"/>
</dbReference>
<dbReference type="PDB" id="8RTI">
    <property type="method" value="X-ray"/>
    <property type="resolution" value="1.50 A"/>
    <property type="chains" value="B=36-123"/>
</dbReference>
<dbReference type="PDB" id="8RU6">
    <property type="method" value="X-ray"/>
    <property type="resolution" value="1.15 A"/>
    <property type="chains" value="B=39-123"/>
</dbReference>
<dbReference type="PDB" id="8RU7">
    <property type="method" value="X-ray"/>
    <property type="resolution" value="1.32 A"/>
    <property type="chains" value="A=45-123"/>
</dbReference>
<dbReference type="PDB" id="8RXI">
    <property type="method" value="X-ray"/>
    <property type="resolution" value="1.48 A"/>
    <property type="chains" value="B=36-123"/>
</dbReference>
<dbReference type="PDB" id="8RXJ">
    <property type="method" value="X-ray"/>
    <property type="resolution" value="1.51 A"/>
    <property type="chains" value="B=36-123"/>
</dbReference>
<dbReference type="PDB" id="8RYH">
    <property type="method" value="X-ray"/>
    <property type="resolution" value="1.77 A"/>
    <property type="chains" value="A=46-123"/>
</dbReference>
<dbReference type="PDBsum" id="1E08"/>
<dbReference type="PDBsum" id="1GX7"/>
<dbReference type="PDBsum" id="1HFE"/>
<dbReference type="PDBsum" id="8BJ7"/>
<dbReference type="PDBsum" id="8BJ8"/>
<dbReference type="PDBsum" id="8RTG"/>
<dbReference type="PDBsum" id="8RTI"/>
<dbReference type="PDBsum" id="8RU6"/>
<dbReference type="PDBsum" id="8RU7"/>
<dbReference type="PDBsum" id="8RXI"/>
<dbReference type="PDBsum" id="8RXJ"/>
<dbReference type="PDBsum" id="8RYH"/>
<dbReference type="SMR" id="P07603"/>
<dbReference type="DIP" id="DIP-6187N"/>
<dbReference type="IntAct" id="P07603">
    <property type="interactions" value="1"/>
</dbReference>
<dbReference type="STRING" id="882.DVU_1770"/>
<dbReference type="PaxDb" id="882-DVU_1770"/>
<dbReference type="EnsemblBacteria" id="AAS96247">
    <property type="protein sequence ID" value="AAS96247"/>
    <property type="gene ID" value="DVU_1770"/>
</dbReference>
<dbReference type="KEGG" id="dvu:DVU_1770"/>
<dbReference type="PATRIC" id="fig|882.5.peg.1626"/>
<dbReference type="eggNOG" id="COG4624">
    <property type="taxonomic scope" value="Bacteria"/>
</dbReference>
<dbReference type="HOGENOM" id="CLU_163904_0_0_7"/>
<dbReference type="OrthoDB" id="5460598at2"/>
<dbReference type="BioCyc" id="MetaCyc:MONOMER-22145"/>
<dbReference type="EvolutionaryTrace" id="P07603"/>
<dbReference type="Proteomes" id="UP000002194">
    <property type="component" value="Chromosome"/>
</dbReference>
<dbReference type="GO" id="GO:0042597">
    <property type="term" value="C:periplasmic space"/>
    <property type="evidence" value="ECO:0007669"/>
    <property type="project" value="UniProtKB-SubCell"/>
</dbReference>
<dbReference type="GO" id="GO:0009055">
    <property type="term" value="F:electron transfer activity"/>
    <property type="evidence" value="ECO:0007669"/>
    <property type="project" value="InterPro"/>
</dbReference>
<dbReference type="GO" id="GO:0008901">
    <property type="term" value="F:ferredoxin hydrogenase activity"/>
    <property type="evidence" value="ECO:0007669"/>
    <property type="project" value="UniProtKB-EC"/>
</dbReference>
<dbReference type="GO" id="GO:0005506">
    <property type="term" value="F:iron ion binding"/>
    <property type="evidence" value="ECO:0007669"/>
    <property type="project" value="InterPro"/>
</dbReference>
<dbReference type="GO" id="GO:0051536">
    <property type="term" value="F:iron-sulfur cluster binding"/>
    <property type="evidence" value="ECO:0007669"/>
    <property type="project" value="UniProtKB-KW"/>
</dbReference>
<dbReference type="Gene3D" id="4.10.260.20">
    <property type="entry name" value="Iron hydrogenase, small subunit"/>
    <property type="match status" value="1"/>
</dbReference>
<dbReference type="InterPro" id="IPR008953">
    <property type="entry name" value="Fe_hydrogenase_HydB"/>
</dbReference>
<dbReference type="InterPro" id="IPR003149">
    <property type="entry name" value="Fe_hydrogenase_ssu"/>
</dbReference>
<dbReference type="InterPro" id="IPR036991">
    <property type="entry name" value="Fe_hydrogenase_ssu_sf"/>
</dbReference>
<dbReference type="InterPro" id="IPR006311">
    <property type="entry name" value="TAT_signal"/>
</dbReference>
<dbReference type="InterPro" id="IPR019546">
    <property type="entry name" value="TAT_signal_bac_arc"/>
</dbReference>
<dbReference type="NCBIfam" id="TIGR01409">
    <property type="entry name" value="TAT_signal_seq"/>
    <property type="match status" value="1"/>
</dbReference>
<dbReference type="Pfam" id="PF02256">
    <property type="entry name" value="Fe_hyd_SSU"/>
    <property type="match status" value="1"/>
</dbReference>
<dbReference type="SMART" id="SM00902">
    <property type="entry name" value="Fe_hyd_SSU"/>
    <property type="match status" value="1"/>
</dbReference>
<dbReference type="SUPFAM" id="SSF48674">
    <property type="entry name" value="Fe-only hydrogenase smaller subunit"/>
    <property type="match status" value="1"/>
</dbReference>
<dbReference type="PROSITE" id="PS51318">
    <property type="entry name" value="TAT"/>
    <property type="match status" value="1"/>
</dbReference>
<accession>P07603</accession>
<organism>
    <name type="scientific">Nitratidesulfovibrio vulgaris (strain ATCC 29579 / DSM 644 / CCUG 34227 / NCIMB 8303 / VKM B-1760 / Hildenborough)</name>
    <name type="common">Desulfovibrio vulgaris</name>
    <dbReference type="NCBI Taxonomy" id="882"/>
    <lineage>
        <taxon>Bacteria</taxon>
        <taxon>Pseudomonadati</taxon>
        <taxon>Thermodesulfobacteriota</taxon>
        <taxon>Desulfovibrionia</taxon>
        <taxon>Desulfovibrionales</taxon>
        <taxon>Desulfovibrionaceae</taxon>
        <taxon>Nitratidesulfovibrio</taxon>
    </lineage>
</organism>
<evidence type="ECO:0000255" key="1">
    <source>
        <dbReference type="PROSITE-ProRule" id="PRU00648"/>
    </source>
</evidence>
<evidence type="ECO:0000256" key="2">
    <source>
        <dbReference type="SAM" id="MobiDB-lite"/>
    </source>
</evidence>
<evidence type="ECO:0000269" key="3">
    <source>
    </source>
</evidence>
<evidence type="ECO:0000269" key="4">
    <source>
    </source>
</evidence>
<evidence type="ECO:0007829" key="5">
    <source>
        <dbReference type="PDB" id="8BJ8"/>
    </source>
</evidence>